<reference key="1">
    <citation type="submission" date="2009-01" db="EMBL/GenBank/DDBJ databases">
        <title>Complete sequence of Geobacter sp. FRC-32.</title>
        <authorList>
            <consortium name="US DOE Joint Genome Institute"/>
            <person name="Lucas S."/>
            <person name="Copeland A."/>
            <person name="Lapidus A."/>
            <person name="Glavina del Rio T."/>
            <person name="Dalin E."/>
            <person name="Tice H."/>
            <person name="Bruce D."/>
            <person name="Goodwin L."/>
            <person name="Pitluck S."/>
            <person name="Saunders E."/>
            <person name="Brettin T."/>
            <person name="Detter J.C."/>
            <person name="Han C."/>
            <person name="Larimer F."/>
            <person name="Land M."/>
            <person name="Hauser L."/>
            <person name="Kyrpides N."/>
            <person name="Ovchinnikova G."/>
            <person name="Kostka J."/>
            <person name="Richardson P."/>
        </authorList>
    </citation>
    <scope>NUCLEOTIDE SEQUENCE [LARGE SCALE GENOMIC DNA]</scope>
    <source>
        <strain>DSM 22248 / JCM 15807 / FRC-32</strain>
    </source>
</reference>
<protein>
    <recommendedName>
        <fullName evidence="1">Phosphatidylserine decarboxylase proenzyme</fullName>
        <ecNumber evidence="1">4.1.1.65</ecNumber>
    </recommendedName>
    <component>
        <recommendedName>
            <fullName evidence="1">Phosphatidylserine decarboxylase alpha chain</fullName>
        </recommendedName>
    </component>
    <component>
        <recommendedName>
            <fullName evidence="1">Phosphatidylserine decarboxylase beta chain</fullName>
        </recommendedName>
    </component>
</protein>
<keyword id="KW-1003">Cell membrane</keyword>
<keyword id="KW-0210">Decarboxylase</keyword>
<keyword id="KW-0444">Lipid biosynthesis</keyword>
<keyword id="KW-0443">Lipid metabolism</keyword>
<keyword id="KW-0456">Lyase</keyword>
<keyword id="KW-0472">Membrane</keyword>
<keyword id="KW-0594">Phospholipid biosynthesis</keyword>
<keyword id="KW-1208">Phospholipid metabolism</keyword>
<keyword id="KW-0670">Pyruvate</keyword>
<keyword id="KW-1185">Reference proteome</keyword>
<keyword id="KW-0865">Zymogen</keyword>
<organism>
    <name type="scientific">Geotalea daltonii (strain DSM 22248 / JCM 15807 / FRC-32)</name>
    <name type="common">Geobacter daltonii</name>
    <dbReference type="NCBI Taxonomy" id="316067"/>
    <lineage>
        <taxon>Bacteria</taxon>
        <taxon>Pseudomonadati</taxon>
        <taxon>Thermodesulfobacteriota</taxon>
        <taxon>Desulfuromonadia</taxon>
        <taxon>Geobacterales</taxon>
        <taxon>Geobacteraceae</taxon>
        <taxon>Geotalea</taxon>
    </lineage>
</organism>
<evidence type="ECO:0000255" key="1">
    <source>
        <dbReference type="HAMAP-Rule" id="MF_00664"/>
    </source>
</evidence>
<dbReference type="EC" id="4.1.1.65" evidence="1"/>
<dbReference type="EMBL" id="CP001390">
    <property type="protein sequence ID" value="ACM19865.1"/>
    <property type="molecule type" value="Genomic_DNA"/>
</dbReference>
<dbReference type="RefSeq" id="WP_012646594.1">
    <property type="nucleotide sequence ID" value="NC_011979.1"/>
</dbReference>
<dbReference type="STRING" id="316067.Geob_1506"/>
<dbReference type="KEGG" id="geo:Geob_1506"/>
<dbReference type="eggNOG" id="COG0688">
    <property type="taxonomic scope" value="Bacteria"/>
</dbReference>
<dbReference type="HOGENOM" id="CLU_072492_0_0_7"/>
<dbReference type="OrthoDB" id="9790893at2"/>
<dbReference type="UniPathway" id="UPA00558">
    <property type="reaction ID" value="UER00616"/>
</dbReference>
<dbReference type="Proteomes" id="UP000007721">
    <property type="component" value="Chromosome"/>
</dbReference>
<dbReference type="GO" id="GO:0005886">
    <property type="term" value="C:plasma membrane"/>
    <property type="evidence" value="ECO:0007669"/>
    <property type="project" value="UniProtKB-SubCell"/>
</dbReference>
<dbReference type="GO" id="GO:0004609">
    <property type="term" value="F:phosphatidylserine decarboxylase activity"/>
    <property type="evidence" value="ECO:0007669"/>
    <property type="project" value="UniProtKB-UniRule"/>
</dbReference>
<dbReference type="GO" id="GO:0006646">
    <property type="term" value="P:phosphatidylethanolamine biosynthetic process"/>
    <property type="evidence" value="ECO:0007669"/>
    <property type="project" value="UniProtKB-UniRule"/>
</dbReference>
<dbReference type="HAMAP" id="MF_00664">
    <property type="entry name" value="PS_decarb_PSD_A"/>
    <property type="match status" value="1"/>
</dbReference>
<dbReference type="InterPro" id="IPR003817">
    <property type="entry name" value="PS_Dcarbxylase"/>
</dbReference>
<dbReference type="InterPro" id="IPR033175">
    <property type="entry name" value="PSD-A"/>
</dbReference>
<dbReference type="NCBIfam" id="NF003678">
    <property type="entry name" value="PRK05305.1-2"/>
    <property type="match status" value="1"/>
</dbReference>
<dbReference type="PANTHER" id="PTHR35809">
    <property type="entry name" value="ARCHAETIDYLSERINE DECARBOXYLASE PROENZYME-RELATED"/>
    <property type="match status" value="1"/>
</dbReference>
<dbReference type="PANTHER" id="PTHR35809:SF1">
    <property type="entry name" value="ARCHAETIDYLSERINE DECARBOXYLASE PROENZYME-RELATED"/>
    <property type="match status" value="1"/>
</dbReference>
<dbReference type="Pfam" id="PF02666">
    <property type="entry name" value="PS_Dcarbxylase"/>
    <property type="match status" value="1"/>
</dbReference>
<sequence length="213" mass="23577">MRNNNVPIAVEGLPFVAGAALISAIFIIIGWKVGAAFFIVVTVFIIFFFRNPKRVTPANEKAVVSPADGVVIYLGPAREPHLDQDMMKISIFMSVFNVHINRVPISARVVDQFYRPGKFLDVRHESATFENEQKGLVLETANGIRLVVVQVAGLIARRIVCYPTIGTMLRRGERYGLIRFGSRLDVYLPLDTELQVTMGDQTVAGETILGVTT</sequence>
<name>PSD_GEODF</name>
<accession>B9M5B0</accession>
<feature type="chain" id="PRO_1000192896" description="Phosphatidylserine decarboxylase beta chain" evidence="1">
    <location>
        <begin position="1"/>
        <end position="181"/>
    </location>
</feature>
<feature type="chain" id="PRO_1000192897" description="Phosphatidylserine decarboxylase alpha chain" evidence="1">
    <location>
        <begin position="182"/>
        <end position="213"/>
    </location>
</feature>
<feature type="active site" description="Schiff-base intermediate with substrate; via pyruvic acid" evidence="1">
    <location>
        <position position="182"/>
    </location>
</feature>
<feature type="site" description="Cleavage (non-hydrolytic); by autocatalysis" evidence="1">
    <location>
        <begin position="181"/>
        <end position="182"/>
    </location>
</feature>
<feature type="modified residue" description="Pyruvic acid (Ser); by autocatalysis" evidence="1">
    <location>
        <position position="182"/>
    </location>
</feature>
<comment type="function">
    <text evidence="1">Catalyzes the formation of phosphatidylethanolamine (PtdEtn) from phosphatidylserine (PtdSer).</text>
</comment>
<comment type="catalytic activity">
    <reaction evidence="1">
        <text>a 1,2-diacyl-sn-glycero-3-phospho-L-serine + H(+) = a 1,2-diacyl-sn-glycero-3-phosphoethanolamine + CO2</text>
        <dbReference type="Rhea" id="RHEA:20828"/>
        <dbReference type="ChEBI" id="CHEBI:15378"/>
        <dbReference type="ChEBI" id="CHEBI:16526"/>
        <dbReference type="ChEBI" id="CHEBI:57262"/>
        <dbReference type="ChEBI" id="CHEBI:64612"/>
        <dbReference type="EC" id="4.1.1.65"/>
    </reaction>
</comment>
<comment type="cofactor">
    <cofactor evidence="1">
        <name>pyruvate</name>
        <dbReference type="ChEBI" id="CHEBI:15361"/>
    </cofactor>
    <text evidence="1">Binds 1 pyruvoyl group covalently per subunit.</text>
</comment>
<comment type="pathway">
    <text evidence="1">Phospholipid metabolism; phosphatidylethanolamine biosynthesis; phosphatidylethanolamine from CDP-diacylglycerol: step 2/2.</text>
</comment>
<comment type="subunit">
    <text evidence="1">Heterodimer of a large membrane-associated beta subunit and a small pyruvoyl-containing alpha subunit.</text>
</comment>
<comment type="subcellular location">
    <subcellularLocation>
        <location evidence="1">Cell membrane</location>
        <topology evidence="1">Peripheral membrane protein</topology>
    </subcellularLocation>
</comment>
<comment type="PTM">
    <text evidence="1">Is synthesized initially as an inactive proenzyme. Formation of the active enzyme involves a self-maturation process in which the active site pyruvoyl group is generated from an internal serine residue via an autocatalytic post-translational modification. Two non-identical subunits are generated from the proenzyme in this reaction, and the pyruvate is formed at the N-terminus of the alpha chain, which is derived from the carboxyl end of the proenzyme. The post-translation cleavage follows an unusual pathway, termed non-hydrolytic serinolysis, in which the side chain hydroxyl group of the serine supplies its oxygen atom to form the C-terminus of the beta chain, while the remainder of the serine residue undergoes an oxidative deamination to produce ammonia and the pyruvoyl prosthetic group on the alpha chain.</text>
</comment>
<comment type="similarity">
    <text evidence="1">Belongs to the phosphatidylserine decarboxylase family. PSD-A subfamily.</text>
</comment>
<proteinExistence type="inferred from homology"/>
<gene>
    <name evidence="1" type="primary">psd</name>
    <name type="ordered locus">Geob_1506</name>
</gene>